<feature type="chain" id="PRO_0000133039" description="Uncharacterized 12.5 kDa protein in HE65-PK2 intergenic region">
    <location>
        <begin position="1"/>
        <end position="110"/>
    </location>
</feature>
<sequence>MFGKSRQSSHGRTSFVDKRVATKIFIEAFEYSYTNTNAISMDKTDEFDFIKPALKPLPDARPPSLLANVMNERKRKLQNTNSTAKCLLPAPPPQLRKLEKKNHLLPLFSL</sequence>
<organism>
    <name type="scientific">Autographa californica nuclear polyhedrosis virus</name>
    <name type="common">AcMNPV</name>
    <dbReference type="NCBI Taxonomy" id="46015"/>
    <lineage>
        <taxon>Viruses</taxon>
        <taxon>Viruses incertae sedis</taxon>
        <taxon>Naldaviricetes</taxon>
        <taxon>Lefavirales</taxon>
        <taxon>Baculoviridae</taxon>
        <taxon>Alphabaculovirus</taxon>
        <taxon>Alphabaculovirus aucalifornicae</taxon>
    </lineage>
</organism>
<organismHost>
    <name type="scientific">Lepidoptera</name>
    <name type="common">butterflies and moths</name>
    <dbReference type="NCBI Taxonomy" id="7088"/>
</organismHost>
<keyword id="KW-1185">Reference proteome</keyword>
<accession>P41660</accession>
<name>Y107_NPVAC</name>
<reference key="1">
    <citation type="journal article" date="1994" name="Virology">
        <title>The complete DNA sequence of Autographa californica nuclear polyhedrosis virus.</title>
        <authorList>
            <person name="Ayres M.D."/>
            <person name="Howard S.C."/>
            <person name="Kuzio J."/>
            <person name="Lopez-Ferber M."/>
            <person name="Possee R.D."/>
        </authorList>
    </citation>
    <scope>NUCLEOTIDE SEQUENCE [LARGE SCALE GENOMIC DNA]</scope>
    <source>
        <strain>C6</strain>
    </source>
</reference>
<dbReference type="EMBL" id="L22858">
    <property type="protein sequence ID" value="AAA66737.1"/>
    <property type="molecule type" value="Genomic_DNA"/>
</dbReference>
<dbReference type="PIR" id="D72863">
    <property type="entry name" value="D72863"/>
</dbReference>
<dbReference type="RefSeq" id="NP_054137.1">
    <property type="nucleotide sequence ID" value="NC_001623.1"/>
</dbReference>
<dbReference type="GeneID" id="1403940"/>
<dbReference type="KEGG" id="vg:1403940"/>
<dbReference type="OrthoDB" id="8415at10239"/>
<dbReference type="Proteomes" id="UP000008292">
    <property type="component" value="Segment"/>
</dbReference>
<dbReference type="InterPro" id="IPR008534">
    <property type="entry name" value="DUF816"/>
</dbReference>
<dbReference type="Pfam" id="PF05674">
    <property type="entry name" value="DUF816"/>
    <property type="match status" value="1"/>
</dbReference>
<protein>
    <recommendedName>
        <fullName>Uncharacterized 12.5 kDa protein in HE65-PK2 intergenic region</fullName>
    </recommendedName>
</protein>
<proteinExistence type="predicted"/>